<name>ARGC_GEOSW</name>
<keyword id="KW-0028">Amino-acid biosynthesis</keyword>
<keyword id="KW-0055">Arginine biosynthesis</keyword>
<keyword id="KW-0963">Cytoplasm</keyword>
<keyword id="KW-0521">NADP</keyword>
<keyword id="KW-0560">Oxidoreductase</keyword>
<accession>C5D764</accession>
<proteinExistence type="inferred from homology"/>
<comment type="function">
    <text evidence="1">Catalyzes the NADPH-dependent reduction of N-acetyl-5-glutamyl phosphate to yield N-acetyl-L-glutamate 5-semialdehyde.</text>
</comment>
<comment type="catalytic activity">
    <reaction evidence="1">
        <text>N-acetyl-L-glutamate 5-semialdehyde + phosphate + NADP(+) = N-acetyl-L-glutamyl 5-phosphate + NADPH + H(+)</text>
        <dbReference type="Rhea" id="RHEA:21588"/>
        <dbReference type="ChEBI" id="CHEBI:15378"/>
        <dbReference type="ChEBI" id="CHEBI:29123"/>
        <dbReference type="ChEBI" id="CHEBI:43474"/>
        <dbReference type="ChEBI" id="CHEBI:57783"/>
        <dbReference type="ChEBI" id="CHEBI:57936"/>
        <dbReference type="ChEBI" id="CHEBI:58349"/>
        <dbReference type="EC" id="1.2.1.38"/>
    </reaction>
</comment>
<comment type="pathway">
    <text evidence="1">Amino-acid biosynthesis; L-arginine biosynthesis; N(2)-acetyl-L-ornithine from L-glutamate: step 3/4.</text>
</comment>
<comment type="subcellular location">
    <subcellularLocation>
        <location evidence="1">Cytoplasm</location>
    </subcellularLocation>
</comment>
<comment type="similarity">
    <text evidence="1">Belongs to the NAGSA dehydrogenase family. Type 1 subfamily.</text>
</comment>
<sequence length="345" mass="38419">MNIAIIGATGYGGVELLRFLQHHPHVHHCSLYSSSQDGIHFSESFPHVGEIEGAILQKIDVEQMADECEVVFFATPPGVSSTLAPTLIDKGVKVIDLSGDFRLKDRSVYEMWYKRQTASDHYLQQAVYGLTEWNKEDIQKAQLLSNPGCYPTAALLGLAPLVKERLIEEDSIIVDAKSGVSGAGRKASLNTHFSEVNENVKIYKVNSHQHIPEIEQMLKAWNERIQPITFSTHLIPMTRGIMATIYAKAKKELSLETLLDLYKTSYEDSKFVRVRKPGQFPATKEVYGSNYCDIGVAYDERTGRVTVVSVIDNLVKGAAGQAIQNLNVMMGWDEESGLMLAPIYP</sequence>
<reference key="1">
    <citation type="submission" date="2009-06" db="EMBL/GenBank/DDBJ databases">
        <title>Complete sequence of chromosome of Geopacillus sp. WCH70.</title>
        <authorList>
            <consortium name="US DOE Joint Genome Institute"/>
            <person name="Lucas S."/>
            <person name="Copeland A."/>
            <person name="Lapidus A."/>
            <person name="Glavina del Rio T."/>
            <person name="Dalin E."/>
            <person name="Tice H."/>
            <person name="Bruce D."/>
            <person name="Goodwin L."/>
            <person name="Pitluck S."/>
            <person name="Chertkov O."/>
            <person name="Brettin T."/>
            <person name="Detter J.C."/>
            <person name="Han C."/>
            <person name="Larimer F."/>
            <person name="Land M."/>
            <person name="Hauser L."/>
            <person name="Kyrpides N."/>
            <person name="Mikhailova N."/>
            <person name="Brumm P."/>
            <person name="Mead D.A."/>
            <person name="Richardson P."/>
        </authorList>
    </citation>
    <scope>NUCLEOTIDE SEQUENCE [LARGE SCALE GENOMIC DNA]</scope>
    <source>
        <strain>WCH70</strain>
    </source>
</reference>
<gene>
    <name evidence="1" type="primary">argC</name>
    <name type="ordered locus">GWCH70_0736</name>
</gene>
<organism>
    <name type="scientific">Geobacillus sp. (strain WCH70)</name>
    <dbReference type="NCBI Taxonomy" id="471223"/>
    <lineage>
        <taxon>Bacteria</taxon>
        <taxon>Bacillati</taxon>
        <taxon>Bacillota</taxon>
        <taxon>Bacilli</taxon>
        <taxon>Bacillales</taxon>
        <taxon>Anoxybacillaceae</taxon>
        <taxon>Geobacillus</taxon>
    </lineage>
</organism>
<feature type="chain" id="PRO_1000203405" description="N-acetyl-gamma-glutamyl-phosphate reductase">
    <location>
        <begin position="1"/>
        <end position="345"/>
    </location>
</feature>
<feature type="active site" evidence="1">
    <location>
        <position position="149"/>
    </location>
</feature>
<evidence type="ECO:0000255" key="1">
    <source>
        <dbReference type="HAMAP-Rule" id="MF_00150"/>
    </source>
</evidence>
<protein>
    <recommendedName>
        <fullName evidence="1">N-acetyl-gamma-glutamyl-phosphate reductase</fullName>
        <shortName evidence="1">AGPR</shortName>
        <ecNumber evidence="1">1.2.1.38</ecNumber>
    </recommendedName>
    <alternativeName>
        <fullName evidence="1">N-acetyl-glutamate semialdehyde dehydrogenase</fullName>
        <shortName evidence="1">NAGSA dehydrogenase</shortName>
    </alternativeName>
</protein>
<dbReference type="EC" id="1.2.1.38" evidence="1"/>
<dbReference type="EMBL" id="CP001638">
    <property type="protein sequence ID" value="ACS23622.1"/>
    <property type="molecule type" value="Genomic_DNA"/>
</dbReference>
<dbReference type="SMR" id="C5D764"/>
<dbReference type="STRING" id="471223.GWCH70_0736"/>
<dbReference type="KEGG" id="gwc:GWCH70_0736"/>
<dbReference type="eggNOG" id="COG0002">
    <property type="taxonomic scope" value="Bacteria"/>
</dbReference>
<dbReference type="HOGENOM" id="CLU_006384_0_1_9"/>
<dbReference type="OrthoDB" id="9801289at2"/>
<dbReference type="UniPathway" id="UPA00068">
    <property type="reaction ID" value="UER00108"/>
</dbReference>
<dbReference type="GO" id="GO:0005737">
    <property type="term" value="C:cytoplasm"/>
    <property type="evidence" value="ECO:0007669"/>
    <property type="project" value="UniProtKB-SubCell"/>
</dbReference>
<dbReference type="GO" id="GO:0003942">
    <property type="term" value="F:N-acetyl-gamma-glutamyl-phosphate reductase activity"/>
    <property type="evidence" value="ECO:0007669"/>
    <property type="project" value="UniProtKB-UniRule"/>
</dbReference>
<dbReference type="GO" id="GO:0051287">
    <property type="term" value="F:NAD binding"/>
    <property type="evidence" value="ECO:0007669"/>
    <property type="project" value="InterPro"/>
</dbReference>
<dbReference type="GO" id="GO:0070401">
    <property type="term" value="F:NADP+ binding"/>
    <property type="evidence" value="ECO:0007669"/>
    <property type="project" value="InterPro"/>
</dbReference>
<dbReference type="GO" id="GO:0006526">
    <property type="term" value="P:L-arginine biosynthetic process"/>
    <property type="evidence" value="ECO:0007669"/>
    <property type="project" value="UniProtKB-UniRule"/>
</dbReference>
<dbReference type="CDD" id="cd23934">
    <property type="entry name" value="AGPR_1_C"/>
    <property type="match status" value="1"/>
</dbReference>
<dbReference type="CDD" id="cd17895">
    <property type="entry name" value="AGPR_1_N"/>
    <property type="match status" value="1"/>
</dbReference>
<dbReference type="FunFam" id="3.30.360.10:FF:000014">
    <property type="entry name" value="N-acetyl-gamma-glutamyl-phosphate reductase"/>
    <property type="match status" value="1"/>
</dbReference>
<dbReference type="Gene3D" id="3.30.360.10">
    <property type="entry name" value="Dihydrodipicolinate Reductase, domain 2"/>
    <property type="match status" value="1"/>
</dbReference>
<dbReference type="Gene3D" id="3.40.50.720">
    <property type="entry name" value="NAD(P)-binding Rossmann-like Domain"/>
    <property type="match status" value="1"/>
</dbReference>
<dbReference type="HAMAP" id="MF_00150">
    <property type="entry name" value="ArgC_type1"/>
    <property type="match status" value="1"/>
</dbReference>
<dbReference type="InterPro" id="IPR023013">
    <property type="entry name" value="AGPR_AS"/>
</dbReference>
<dbReference type="InterPro" id="IPR000706">
    <property type="entry name" value="AGPR_type-1"/>
</dbReference>
<dbReference type="InterPro" id="IPR036291">
    <property type="entry name" value="NAD(P)-bd_dom_sf"/>
</dbReference>
<dbReference type="InterPro" id="IPR050085">
    <property type="entry name" value="NAGSA_dehydrogenase"/>
</dbReference>
<dbReference type="InterPro" id="IPR000534">
    <property type="entry name" value="Semialdehyde_DH_NAD-bd"/>
</dbReference>
<dbReference type="NCBIfam" id="TIGR01850">
    <property type="entry name" value="argC"/>
    <property type="match status" value="1"/>
</dbReference>
<dbReference type="PANTHER" id="PTHR32338:SF10">
    <property type="entry name" value="N-ACETYL-GAMMA-GLUTAMYL-PHOSPHATE REDUCTASE, CHLOROPLASTIC-RELATED"/>
    <property type="match status" value="1"/>
</dbReference>
<dbReference type="PANTHER" id="PTHR32338">
    <property type="entry name" value="N-ACETYL-GAMMA-GLUTAMYL-PHOSPHATE REDUCTASE, CHLOROPLASTIC-RELATED-RELATED"/>
    <property type="match status" value="1"/>
</dbReference>
<dbReference type="Pfam" id="PF01118">
    <property type="entry name" value="Semialdhyde_dh"/>
    <property type="match status" value="1"/>
</dbReference>
<dbReference type="Pfam" id="PF22698">
    <property type="entry name" value="Semialdhyde_dhC_1"/>
    <property type="match status" value="1"/>
</dbReference>
<dbReference type="SMART" id="SM00859">
    <property type="entry name" value="Semialdhyde_dh"/>
    <property type="match status" value="1"/>
</dbReference>
<dbReference type="SUPFAM" id="SSF55347">
    <property type="entry name" value="Glyceraldehyde-3-phosphate dehydrogenase-like, C-terminal domain"/>
    <property type="match status" value="1"/>
</dbReference>
<dbReference type="SUPFAM" id="SSF51735">
    <property type="entry name" value="NAD(P)-binding Rossmann-fold domains"/>
    <property type="match status" value="1"/>
</dbReference>
<dbReference type="PROSITE" id="PS01224">
    <property type="entry name" value="ARGC"/>
    <property type="match status" value="1"/>
</dbReference>